<protein>
    <recommendedName>
        <fullName evidence="1">Flagellar P-ring protein 1</fullName>
    </recommendedName>
    <alternativeName>
        <fullName evidence="1">Basal body P-ring protein 1</fullName>
    </alternativeName>
</protein>
<feature type="signal peptide" evidence="1">
    <location>
        <begin position="1"/>
        <end position="25"/>
    </location>
</feature>
<feature type="chain" id="PRO_0000041806" description="Flagellar P-ring protein 1">
    <location>
        <begin position="26"/>
        <end position="373"/>
    </location>
</feature>
<accession>Q87JI2</accession>
<evidence type="ECO:0000255" key="1">
    <source>
        <dbReference type="HAMAP-Rule" id="MF_00416"/>
    </source>
</evidence>
<evidence type="ECO:0000305" key="2"/>
<comment type="function">
    <text evidence="1">Assembles around the rod to form the L-ring and probably protects the motor/basal body from shearing forces during rotation.</text>
</comment>
<comment type="subunit">
    <text evidence="1">The basal body constitutes a major portion of the flagellar organelle and consists of four rings (L,P,S, and M) mounted on a central rod.</text>
</comment>
<comment type="subcellular location">
    <subcellularLocation>
        <location evidence="1">Periplasm</location>
    </subcellularLocation>
    <subcellularLocation>
        <location evidence="1">Bacterial flagellum basal body</location>
    </subcellularLocation>
</comment>
<comment type="similarity">
    <text evidence="1">Belongs to the FlgI family.</text>
</comment>
<comment type="sequence caution" evidence="2">
    <conflict type="erroneous initiation">
        <sequence resource="EMBL-CDS" id="BAC61614"/>
    </conflict>
</comment>
<dbReference type="EMBL" id="BA000032">
    <property type="protein sequence ID" value="BAC61614.1"/>
    <property type="status" value="ALT_INIT"/>
    <property type="molecule type" value="Genomic_DNA"/>
</dbReference>
<dbReference type="RefSeq" id="NP_799781.1">
    <property type="nucleotide sequence ID" value="NC_004605.1"/>
</dbReference>
<dbReference type="RefSeq" id="WP_005463987.1">
    <property type="nucleotide sequence ID" value="NC_004605.1"/>
</dbReference>
<dbReference type="SMR" id="Q87JI2"/>
<dbReference type="GeneID" id="1190959"/>
<dbReference type="KEGG" id="vpa:VPA0271"/>
<dbReference type="PATRIC" id="fig|223926.6.peg.3223"/>
<dbReference type="eggNOG" id="COG1706">
    <property type="taxonomic scope" value="Bacteria"/>
</dbReference>
<dbReference type="HOGENOM" id="CLU_045235_1_0_6"/>
<dbReference type="Proteomes" id="UP000002493">
    <property type="component" value="Chromosome 2"/>
</dbReference>
<dbReference type="GO" id="GO:0009428">
    <property type="term" value="C:bacterial-type flagellum basal body, distal rod, P ring"/>
    <property type="evidence" value="ECO:0007669"/>
    <property type="project" value="InterPro"/>
</dbReference>
<dbReference type="GO" id="GO:0030288">
    <property type="term" value="C:outer membrane-bounded periplasmic space"/>
    <property type="evidence" value="ECO:0007669"/>
    <property type="project" value="InterPro"/>
</dbReference>
<dbReference type="GO" id="GO:0005198">
    <property type="term" value="F:structural molecule activity"/>
    <property type="evidence" value="ECO:0007669"/>
    <property type="project" value="InterPro"/>
</dbReference>
<dbReference type="GO" id="GO:0071973">
    <property type="term" value="P:bacterial-type flagellum-dependent cell motility"/>
    <property type="evidence" value="ECO:0007669"/>
    <property type="project" value="InterPro"/>
</dbReference>
<dbReference type="HAMAP" id="MF_00416">
    <property type="entry name" value="FlgI"/>
    <property type="match status" value="1"/>
</dbReference>
<dbReference type="InterPro" id="IPR001782">
    <property type="entry name" value="Flag_FlgI"/>
</dbReference>
<dbReference type="NCBIfam" id="NF003676">
    <property type="entry name" value="PRK05303.1"/>
    <property type="match status" value="1"/>
</dbReference>
<dbReference type="PANTHER" id="PTHR30381">
    <property type="entry name" value="FLAGELLAR P-RING PERIPLASMIC PROTEIN FLGI"/>
    <property type="match status" value="1"/>
</dbReference>
<dbReference type="PANTHER" id="PTHR30381:SF0">
    <property type="entry name" value="FLAGELLAR P-RING PROTEIN"/>
    <property type="match status" value="1"/>
</dbReference>
<dbReference type="Pfam" id="PF02119">
    <property type="entry name" value="FlgI"/>
    <property type="match status" value="1"/>
</dbReference>
<dbReference type="PRINTS" id="PR01010">
    <property type="entry name" value="FLGPRINGFLGI"/>
</dbReference>
<proteinExistence type="inferred from homology"/>
<sequence>MKPINTFFSSFLLALTLGLPATSQAEVEIPIMDLVDVRGIRENQLVGYGLVVGLAGQGDRNQVKFTSQSITNMLRQFGVQIDDSMDPKLRNVASVSVTASVDPMAGPGQTLDVVVSSIGDAKSLRGGTLLLTPLRGIDGEVYAIAQGSVVVGGLSAEGKSGSKVEVNTPTAGRVPNGATLEREIKTDFNQRDEITLNLRKPSFTTAKNIAREINNTFGPNVAVAINKARVDMRAPKDTQQRVIMMSMLEEMSVVEGRKPARIVFNSRTGTVVIGKNVKVGEAAVSHGNLTVRISESEKVSQPNAFADGETKVVNQTDIDVNEELAQMVIWPPGTELNTIVDAVNSLGATPTDLMSILQALNEAGALNAELVVI</sequence>
<gene>
    <name evidence="1" type="primary">flgI1</name>
    <name type="ordered locus">VPA0271</name>
</gene>
<organism>
    <name type="scientific">Vibrio parahaemolyticus serotype O3:K6 (strain RIMD 2210633)</name>
    <dbReference type="NCBI Taxonomy" id="223926"/>
    <lineage>
        <taxon>Bacteria</taxon>
        <taxon>Pseudomonadati</taxon>
        <taxon>Pseudomonadota</taxon>
        <taxon>Gammaproteobacteria</taxon>
        <taxon>Vibrionales</taxon>
        <taxon>Vibrionaceae</taxon>
        <taxon>Vibrio</taxon>
    </lineage>
</organism>
<name>FLGI1_VIBPA</name>
<reference key="1">
    <citation type="journal article" date="2003" name="Lancet">
        <title>Genome sequence of Vibrio parahaemolyticus: a pathogenic mechanism distinct from that of V. cholerae.</title>
        <authorList>
            <person name="Makino K."/>
            <person name="Oshima K."/>
            <person name="Kurokawa K."/>
            <person name="Yokoyama K."/>
            <person name="Uda T."/>
            <person name="Tagomori K."/>
            <person name="Iijima Y."/>
            <person name="Najima M."/>
            <person name="Nakano M."/>
            <person name="Yamashita A."/>
            <person name="Kubota Y."/>
            <person name="Kimura S."/>
            <person name="Yasunaga T."/>
            <person name="Honda T."/>
            <person name="Shinagawa H."/>
            <person name="Hattori M."/>
            <person name="Iida T."/>
        </authorList>
    </citation>
    <scope>NUCLEOTIDE SEQUENCE [LARGE SCALE GENOMIC DNA]</scope>
    <source>
        <strain>RIMD 2210633</strain>
    </source>
</reference>
<keyword id="KW-0975">Bacterial flagellum</keyword>
<keyword id="KW-0574">Periplasm</keyword>
<keyword id="KW-0732">Signal</keyword>